<feature type="chain" id="PRO_0000224438" description="Valine--tRNA ligase">
    <location>
        <begin position="1"/>
        <end position="876"/>
    </location>
</feature>
<feature type="coiled-coil region" evidence="1">
    <location>
        <begin position="805"/>
        <end position="826"/>
    </location>
</feature>
<feature type="coiled-coil region" evidence="1">
    <location>
        <begin position="853"/>
        <end position="875"/>
    </location>
</feature>
<feature type="short sequence motif" description="'HIGH' region">
    <location>
        <begin position="43"/>
        <end position="53"/>
    </location>
</feature>
<feature type="short sequence motif" description="'KMSKS' region">
    <location>
        <begin position="532"/>
        <end position="536"/>
    </location>
</feature>
<feature type="binding site" evidence="1">
    <location>
        <position position="535"/>
    </location>
    <ligand>
        <name>ATP</name>
        <dbReference type="ChEBI" id="CHEBI:30616"/>
    </ligand>
</feature>
<protein>
    <recommendedName>
        <fullName evidence="1">Valine--tRNA ligase</fullName>
        <ecNumber evidence="1">6.1.1.9</ecNumber>
    </recommendedName>
    <alternativeName>
        <fullName evidence="1">Valyl-tRNA synthetase</fullName>
        <shortName evidence="1">ValRS</shortName>
    </alternativeName>
</protein>
<sequence>MELASKYNPADVEGKWYQYWLDHKLFSSKPDGREPYTIVIPPPNVTGVLHMGHMLNNTIQDILVRRARMEGKNACWVPGTDHASIATEAKVVNKLAAQGIKKTDLSRDEFLKHAWAWTDEHGGIILKQLRKLGASCDWDRTAFTMDEKRSESVLKVFVDLYNKGLIYRGVRMVNWDPKALTALSDEEVIYKEEHGKLFYLRYKIEGEDGYAVVATTRPETIMGDTAMCINPNDPKNQHLKGKKVIVPLVGRVIPVIEDDYVDIEFGTGCLKVTPAHDVNDYMLGEKYNLPSIDIFNDNGTISEAAGMYIGMDRFDVRKQIEKDLEAAGLLEKTEAYTNKVGYSERTNVVIEPKLSMQWFLKMEHLAQIALEPVMKDDIKFYPAKYKNTYRHWMENIKDWCISRQLWWGHRIPAYFLPEGGYVVAVTDEEALKLAREKTGNPNLKMTDLRQDEDCLDTWFSSWLWPISLFDGINNPGNEEINYYYPTSDLVTGPDIIFFWVARMIMAGYEYEGKMPFKNVYFTGIVRDKLGRKMSKSLGNSPDPLELIEKYGADGVRMGMMLSAPAGNDILFDDALCEQGRNFCNKIWNAFRLVKGWENGMGTIDIPADAHLAVQWFDQRLDAAAVEVADLFSKYRLSEALMLIYKLFWDEFSSWLLEIVKPAYGQPVNGFIYSMTLSAFERLLAMLHPFMPFITEELWQQLREREPGASLMVQPLGEPGEVNEEFLQQFETAKEIISSVRTIRLQKNIALKEPLELQVVGANPVEKMNPVIRKMCNLSAIEVVDAKADGASSFMIGTTEFAVPLGNMIDVDAEIARMEAELKHKEGFLQGVLKKLSNEKFVNNAPAAVIEMERKKQADAESIIQSLKESIASLKNV</sequence>
<keyword id="KW-0030">Aminoacyl-tRNA synthetase</keyword>
<keyword id="KW-0067">ATP-binding</keyword>
<keyword id="KW-0175">Coiled coil</keyword>
<keyword id="KW-0963">Cytoplasm</keyword>
<keyword id="KW-0436">Ligase</keyword>
<keyword id="KW-0547">Nucleotide-binding</keyword>
<keyword id="KW-0648">Protein biosynthesis</keyword>
<accession>Q5LGN1</accession>
<gene>
    <name evidence="1" type="primary">valS</name>
    <name type="ordered locus">BF0966</name>
</gene>
<name>SYV_BACFN</name>
<dbReference type="EC" id="6.1.1.9" evidence="1"/>
<dbReference type="EMBL" id="CR626927">
    <property type="protein sequence ID" value="CAH06707.1"/>
    <property type="molecule type" value="Genomic_DNA"/>
</dbReference>
<dbReference type="RefSeq" id="WP_005801208.1">
    <property type="nucleotide sequence ID" value="NZ_UFTH01000001.1"/>
</dbReference>
<dbReference type="SMR" id="Q5LGN1"/>
<dbReference type="PaxDb" id="272559-BF9343_0926"/>
<dbReference type="KEGG" id="bfs:BF9343_0926"/>
<dbReference type="eggNOG" id="COG0525">
    <property type="taxonomic scope" value="Bacteria"/>
</dbReference>
<dbReference type="HOGENOM" id="CLU_001493_0_2_10"/>
<dbReference type="Proteomes" id="UP000006731">
    <property type="component" value="Chromosome"/>
</dbReference>
<dbReference type="GO" id="GO:0005829">
    <property type="term" value="C:cytosol"/>
    <property type="evidence" value="ECO:0007669"/>
    <property type="project" value="TreeGrafter"/>
</dbReference>
<dbReference type="GO" id="GO:0002161">
    <property type="term" value="F:aminoacyl-tRNA deacylase activity"/>
    <property type="evidence" value="ECO:0007669"/>
    <property type="project" value="InterPro"/>
</dbReference>
<dbReference type="GO" id="GO:0005524">
    <property type="term" value="F:ATP binding"/>
    <property type="evidence" value="ECO:0007669"/>
    <property type="project" value="UniProtKB-UniRule"/>
</dbReference>
<dbReference type="GO" id="GO:0004832">
    <property type="term" value="F:valine-tRNA ligase activity"/>
    <property type="evidence" value="ECO:0007669"/>
    <property type="project" value="UniProtKB-UniRule"/>
</dbReference>
<dbReference type="GO" id="GO:0006438">
    <property type="term" value="P:valyl-tRNA aminoacylation"/>
    <property type="evidence" value="ECO:0007669"/>
    <property type="project" value="UniProtKB-UniRule"/>
</dbReference>
<dbReference type="CDD" id="cd07962">
    <property type="entry name" value="Anticodon_Ia_Val"/>
    <property type="match status" value="1"/>
</dbReference>
<dbReference type="CDD" id="cd00817">
    <property type="entry name" value="ValRS_core"/>
    <property type="match status" value="1"/>
</dbReference>
<dbReference type="FunFam" id="1.10.287.380:FF:000001">
    <property type="entry name" value="Valine--tRNA ligase"/>
    <property type="match status" value="1"/>
</dbReference>
<dbReference type="FunFam" id="3.40.50.620:FF:000032">
    <property type="entry name" value="Valine--tRNA ligase"/>
    <property type="match status" value="1"/>
</dbReference>
<dbReference type="FunFam" id="3.90.740.10:FF:000015">
    <property type="entry name" value="Valine--tRNA ligase"/>
    <property type="match status" value="1"/>
</dbReference>
<dbReference type="Gene3D" id="3.40.50.620">
    <property type="entry name" value="HUPs"/>
    <property type="match status" value="2"/>
</dbReference>
<dbReference type="Gene3D" id="1.10.730.10">
    <property type="entry name" value="Isoleucyl-tRNA Synthetase, Domain 1"/>
    <property type="match status" value="1"/>
</dbReference>
<dbReference type="Gene3D" id="1.10.287.380">
    <property type="entry name" value="Valyl-tRNA synthetase, C-terminal domain"/>
    <property type="match status" value="1"/>
</dbReference>
<dbReference type="Gene3D" id="3.90.740.10">
    <property type="entry name" value="Valyl/Leucyl/Isoleucyl-tRNA synthetase, editing domain"/>
    <property type="match status" value="2"/>
</dbReference>
<dbReference type="HAMAP" id="MF_02004">
    <property type="entry name" value="Val_tRNA_synth_type1"/>
    <property type="match status" value="1"/>
</dbReference>
<dbReference type="InterPro" id="IPR001412">
    <property type="entry name" value="aa-tRNA-synth_I_CS"/>
</dbReference>
<dbReference type="InterPro" id="IPR002300">
    <property type="entry name" value="aa-tRNA-synth_Ia"/>
</dbReference>
<dbReference type="InterPro" id="IPR033705">
    <property type="entry name" value="Anticodon_Ia_Val"/>
</dbReference>
<dbReference type="InterPro" id="IPR013155">
    <property type="entry name" value="M/V/L/I-tRNA-synth_anticd-bd"/>
</dbReference>
<dbReference type="InterPro" id="IPR014729">
    <property type="entry name" value="Rossmann-like_a/b/a_fold"/>
</dbReference>
<dbReference type="InterPro" id="IPR010978">
    <property type="entry name" value="tRNA-bd_arm"/>
</dbReference>
<dbReference type="InterPro" id="IPR009080">
    <property type="entry name" value="tRNAsynth_Ia_anticodon-bd"/>
</dbReference>
<dbReference type="InterPro" id="IPR037118">
    <property type="entry name" value="Val-tRNA_synth_C_sf"/>
</dbReference>
<dbReference type="InterPro" id="IPR019499">
    <property type="entry name" value="Val-tRNA_synth_tRNA-bd"/>
</dbReference>
<dbReference type="InterPro" id="IPR009008">
    <property type="entry name" value="Val/Leu/Ile-tRNA-synth_edit"/>
</dbReference>
<dbReference type="InterPro" id="IPR002303">
    <property type="entry name" value="Valyl-tRNA_ligase"/>
</dbReference>
<dbReference type="NCBIfam" id="NF004349">
    <property type="entry name" value="PRK05729.1"/>
    <property type="match status" value="1"/>
</dbReference>
<dbReference type="NCBIfam" id="TIGR00422">
    <property type="entry name" value="valS"/>
    <property type="match status" value="1"/>
</dbReference>
<dbReference type="PANTHER" id="PTHR11946:SF109">
    <property type="entry name" value="VALINE--TRNA LIGASE"/>
    <property type="match status" value="1"/>
</dbReference>
<dbReference type="PANTHER" id="PTHR11946">
    <property type="entry name" value="VALYL-TRNA SYNTHETASES"/>
    <property type="match status" value="1"/>
</dbReference>
<dbReference type="Pfam" id="PF08264">
    <property type="entry name" value="Anticodon_1"/>
    <property type="match status" value="1"/>
</dbReference>
<dbReference type="Pfam" id="PF00133">
    <property type="entry name" value="tRNA-synt_1"/>
    <property type="match status" value="1"/>
</dbReference>
<dbReference type="Pfam" id="PF10458">
    <property type="entry name" value="Val_tRNA-synt_C"/>
    <property type="match status" value="1"/>
</dbReference>
<dbReference type="PRINTS" id="PR00986">
    <property type="entry name" value="TRNASYNTHVAL"/>
</dbReference>
<dbReference type="SUPFAM" id="SSF47323">
    <property type="entry name" value="Anticodon-binding domain of a subclass of class I aminoacyl-tRNA synthetases"/>
    <property type="match status" value="1"/>
</dbReference>
<dbReference type="SUPFAM" id="SSF52374">
    <property type="entry name" value="Nucleotidylyl transferase"/>
    <property type="match status" value="1"/>
</dbReference>
<dbReference type="SUPFAM" id="SSF46589">
    <property type="entry name" value="tRNA-binding arm"/>
    <property type="match status" value="1"/>
</dbReference>
<dbReference type="SUPFAM" id="SSF50677">
    <property type="entry name" value="ValRS/IleRS/LeuRS editing domain"/>
    <property type="match status" value="1"/>
</dbReference>
<dbReference type="PROSITE" id="PS00178">
    <property type="entry name" value="AA_TRNA_LIGASE_I"/>
    <property type="match status" value="1"/>
</dbReference>
<proteinExistence type="inferred from homology"/>
<reference key="1">
    <citation type="journal article" date="2005" name="Science">
        <title>Extensive DNA inversions in the B. fragilis genome control variable gene expression.</title>
        <authorList>
            <person name="Cerdeno-Tarraga A.-M."/>
            <person name="Patrick S."/>
            <person name="Crossman L.C."/>
            <person name="Blakely G."/>
            <person name="Abratt V."/>
            <person name="Lennard N."/>
            <person name="Poxton I."/>
            <person name="Duerden B."/>
            <person name="Harris B."/>
            <person name="Quail M.A."/>
            <person name="Barron A."/>
            <person name="Clark L."/>
            <person name="Corton C."/>
            <person name="Doggett J."/>
            <person name="Holden M.T.G."/>
            <person name="Larke N."/>
            <person name="Line A."/>
            <person name="Lord A."/>
            <person name="Norbertczak H."/>
            <person name="Ormond D."/>
            <person name="Price C."/>
            <person name="Rabbinowitsch E."/>
            <person name="Woodward J."/>
            <person name="Barrell B.G."/>
            <person name="Parkhill J."/>
        </authorList>
    </citation>
    <scope>NUCLEOTIDE SEQUENCE [LARGE SCALE GENOMIC DNA]</scope>
    <source>
        <strain>ATCC 25285 / DSM 2151 / CCUG 4856 / JCM 11019 / LMG 10263 / NCTC 9343 / Onslow / VPI 2553 / EN-2</strain>
    </source>
</reference>
<comment type="function">
    <text evidence="1">Catalyzes the attachment of valine to tRNA(Val). As ValRS can inadvertently accommodate and process structurally similar amino acids such as threonine, to avoid such errors, it has a 'posttransfer' editing activity that hydrolyzes mischarged Thr-tRNA(Val) in a tRNA-dependent manner.</text>
</comment>
<comment type="catalytic activity">
    <reaction evidence="1">
        <text>tRNA(Val) + L-valine + ATP = L-valyl-tRNA(Val) + AMP + diphosphate</text>
        <dbReference type="Rhea" id="RHEA:10704"/>
        <dbReference type="Rhea" id="RHEA-COMP:9672"/>
        <dbReference type="Rhea" id="RHEA-COMP:9708"/>
        <dbReference type="ChEBI" id="CHEBI:30616"/>
        <dbReference type="ChEBI" id="CHEBI:33019"/>
        <dbReference type="ChEBI" id="CHEBI:57762"/>
        <dbReference type="ChEBI" id="CHEBI:78442"/>
        <dbReference type="ChEBI" id="CHEBI:78537"/>
        <dbReference type="ChEBI" id="CHEBI:456215"/>
        <dbReference type="EC" id="6.1.1.9"/>
    </reaction>
</comment>
<comment type="subunit">
    <text evidence="1">Monomer.</text>
</comment>
<comment type="subcellular location">
    <subcellularLocation>
        <location evidence="1">Cytoplasm</location>
    </subcellularLocation>
</comment>
<comment type="domain">
    <text evidence="1">ValRS has two distinct active sites: one for aminoacylation and one for editing. The misactivated threonine is translocated from the active site to the editing site.</text>
</comment>
<comment type="domain">
    <text evidence="1">The C-terminal coiled-coil domain is crucial for aminoacylation activity.</text>
</comment>
<comment type="similarity">
    <text evidence="1">Belongs to the class-I aminoacyl-tRNA synthetase family. ValS type 1 subfamily.</text>
</comment>
<evidence type="ECO:0000255" key="1">
    <source>
        <dbReference type="HAMAP-Rule" id="MF_02004"/>
    </source>
</evidence>
<organism>
    <name type="scientific">Bacteroides fragilis (strain ATCC 25285 / DSM 2151 / CCUG 4856 / JCM 11019 / LMG 10263 / NCTC 9343 / Onslow / VPI 2553 / EN-2)</name>
    <dbReference type="NCBI Taxonomy" id="272559"/>
    <lineage>
        <taxon>Bacteria</taxon>
        <taxon>Pseudomonadati</taxon>
        <taxon>Bacteroidota</taxon>
        <taxon>Bacteroidia</taxon>
        <taxon>Bacteroidales</taxon>
        <taxon>Bacteroidaceae</taxon>
        <taxon>Bacteroides</taxon>
    </lineage>
</organism>